<accession>Q9D1F3</accession>
<accession>A2AF50</accession>
<accession>Q3TDX9</accession>
<sequence length="157" mass="18059">MKFPCLSFRQPYAGLILNGVKTLETRWRPLLSSVQKYTIAIHIAHKDWEDDEWQEVLMERLGMTWTQIQTLLQAGEKYGRGVIAGLIDIGETFQCPETLTAEEAVELETQAVLTNLQLKYLTQVSNPRWLLEPIPRKGGKDIFQVDIPEHLIPLEKE</sequence>
<name>EOLA1_MOUSE</name>
<keyword id="KW-0002">3D-structure</keyword>
<keyword id="KW-1185">Reference proteome</keyword>
<reference key="1">
    <citation type="journal article" date="2005" name="Science">
        <title>The transcriptional landscape of the mammalian genome.</title>
        <authorList>
            <person name="Carninci P."/>
            <person name="Kasukawa T."/>
            <person name="Katayama S."/>
            <person name="Gough J."/>
            <person name="Frith M.C."/>
            <person name="Maeda N."/>
            <person name="Oyama R."/>
            <person name="Ravasi T."/>
            <person name="Lenhard B."/>
            <person name="Wells C."/>
            <person name="Kodzius R."/>
            <person name="Shimokawa K."/>
            <person name="Bajic V.B."/>
            <person name="Brenner S.E."/>
            <person name="Batalov S."/>
            <person name="Forrest A.R."/>
            <person name="Zavolan M."/>
            <person name="Davis M.J."/>
            <person name="Wilming L.G."/>
            <person name="Aidinis V."/>
            <person name="Allen J.E."/>
            <person name="Ambesi-Impiombato A."/>
            <person name="Apweiler R."/>
            <person name="Aturaliya R.N."/>
            <person name="Bailey T.L."/>
            <person name="Bansal M."/>
            <person name="Baxter L."/>
            <person name="Beisel K.W."/>
            <person name="Bersano T."/>
            <person name="Bono H."/>
            <person name="Chalk A.M."/>
            <person name="Chiu K.P."/>
            <person name="Choudhary V."/>
            <person name="Christoffels A."/>
            <person name="Clutterbuck D.R."/>
            <person name="Crowe M.L."/>
            <person name="Dalla E."/>
            <person name="Dalrymple B.P."/>
            <person name="de Bono B."/>
            <person name="Della Gatta G."/>
            <person name="di Bernardo D."/>
            <person name="Down T."/>
            <person name="Engstrom P."/>
            <person name="Fagiolini M."/>
            <person name="Faulkner G."/>
            <person name="Fletcher C.F."/>
            <person name="Fukushima T."/>
            <person name="Furuno M."/>
            <person name="Futaki S."/>
            <person name="Gariboldi M."/>
            <person name="Georgii-Hemming P."/>
            <person name="Gingeras T.R."/>
            <person name="Gojobori T."/>
            <person name="Green R.E."/>
            <person name="Gustincich S."/>
            <person name="Harbers M."/>
            <person name="Hayashi Y."/>
            <person name="Hensch T.K."/>
            <person name="Hirokawa N."/>
            <person name="Hill D."/>
            <person name="Huminiecki L."/>
            <person name="Iacono M."/>
            <person name="Ikeo K."/>
            <person name="Iwama A."/>
            <person name="Ishikawa T."/>
            <person name="Jakt M."/>
            <person name="Kanapin A."/>
            <person name="Katoh M."/>
            <person name="Kawasawa Y."/>
            <person name="Kelso J."/>
            <person name="Kitamura H."/>
            <person name="Kitano H."/>
            <person name="Kollias G."/>
            <person name="Krishnan S.P."/>
            <person name="Kruger A."/>
            <person name="Kummerfeld S.K."/>
            <person name="Kurochkin I.V."/>
            <person name="Lareau L.F."/>
            <person name="Lazarevic D."/>
            <person name="Lipovich L."/>
            <person name="Liu J."/>
            <person name="Liuni S."/>
            <person name="McWilliam S."/>
            <person name="Madan Babu M."/>
            <person name="Madera M."/>
            <person name="Marchionni L."/>
            <person name="Matsuda H."/>
            <person name="Matsuzawa S."/>
            <person name="Miki H."/>
            <person name="Mignone F."/>
            <person name="Miyake S."/>
            <person name="Morris K."/>
            <person name="Mottagui-Tabar S."/>
            <person name="Mulder N."/>
            <person name="Nakano N."/>
            <person name="Nakauchi H."/>
            <person name="Ng P."/>
            <person name="Nilsson R."/>
            <person name="Nishiguchi S."/>
            <person name="Nishikawa S."/>
            <person name="Nori F."/>
            <person name="Ohara O."/>
            <person name="Okazaki Y."/>
            <person name="Orlando V."/>
            <person name="Pang K.C."/>
            <person name="Pavan W.J."/>
            <person name="Pavesi G."/>
            <person name="Pesole G."/>
            <person name="Petrovsky N."/>
            <person name="Piazza S."/>
            <person name="Reed J."/>
            <person name="Reid J.F."/>
            <person name="Ring B.Z."/>
            <person name="Ringwald M."/>
            <person name="Rost B."/>
            <person name="Ruan Y."/>
            <person name="Salzberg S.L."/>
            <person name="Sandelin A."/>
            <person name="Schneider C."/>
            <person name="Schoenbach C."/>
            <person name="Sekiguchi K."/>
            <person name="Semple C.A."/>
            <person name="Seno S."/>
            <person name="Sessa L."/>
            <person name="Sheng Y."/>
            <person name="Shibata Y."/>
            <person name="Shimada H."/>
            <person name="Shimada K."/>
            <person name="Silva D."/>
            <person name="Sinclair B."/>
            <person name="Sperling S."/>
            <person name="Stupka E."/>
            <person name="Sugiura K."/>
            <person name="Sultana R."/>
            <person name="Takenaka Y."/>
            <person name="Taki K."/>
            <person name="Tammoja K."/>
            <person name="Tan S.L."/>
            <person name="Tang S."/>
            <person name="Taylor M.S."/>
            <person name="Tegner J."/>
            <person name="Teichmann S.A."/>
            <person name="Ueda H.R."/>
            <person name="van Nimwegen E."/>
            <person name="Verardo R."/>
            <person name="Wei C.L."/>
            <person name="Yagi K."/>
            <person name="Yamanishi H."/>
            <person name="Zabarovsky E."/>
            <person name="Zhu S."/>
            <person name="Zimmer A."/>
            <person name="Hide W."/>
            <person name="Bult C."/>
            <person name="Grimmond S.M."/>
            <person name="Teasdale R.D."/>
            <person name="Liu E.T."/>
            <person name="Brusic V."/>
            <person name="Quackenbush J."/>
            <person name="Wahlestedt C."/>
            <person name="Mattick J.S."/>
            <person name="Hume D.A."/>
            <person name="Kai C."/>
            <person name="Sasaki D."/>
            <person name="Tomaru Y."/>
            <person name="Fukuda S."/>
            <person name="Kanamori-Katayama M."/>
            <person name="Suzuki M."/>
            <person name="Aoki J."/>
            <person name="Arakawa T."/>
            <person name="Iida J."/>
            <person name="Imamura K."/>
            <person name="Itoh M."/>
            <person name="Kato T."/>
            <person name="Kawaji H."/>
            <person name="Kawagashira N."/>
            <person name="Kawashima T."/>
            <person name="Kojima M."/>
            <person name="Kondo S."/>
            <person name="Konno H."/>
            <person name="Nakano K."/>
            <person name="Ninomiya N."/>
            <person name="Nishio T."/>
            <person name="Okada M."/>
            <person name="Plessy C."/>
            <person name="Shibata K."/>
            <person name="Shiraki T."/>
            <person name="Suzuki S."/>
            <person name="Tagami M."/>
            <person name="Waki K."/>
            <person name="Watahiki A."/>
            <person name="Okamura-Oho Y."/>
            <person name="Suzuki H."/>
            <person name="Kawai J."/>
            <person name="Hayashizaki Y."/>
        </authorList>
    </citation>
    <scope>NUCLEOTIDE SEQUENCE [LARGE SCALE MRNA]</scope>
    <source>
        <strain>C57BL/6J</strain>
    </source>
</reference>
<reference key="2">
    <citation type="journal article" date="2009" name="PLoS Biol.">
        <title>Lineage-specific biology revealed by a finished genome assembly of the mouse.</title>
        <authorList>
            <person name="Church D.M."/>
            <person name="Goodstadt L."/>
            <person name="Hillier L.W."/>
            <person name="Zody M.C."/>
            <person name="Goldstein S."/>
            <person name="She X."/>
            <person name="Bult C.J."/>
            <person name="Agarwala R."/>
            <person name="Cherry J.L."/>
            <person name="DiCuccio M."/>
            <person name="Hlavina W."/>
            <person name="Kapustin Y."/>
            <person name="Meric P."/>
            <person name="Maglott D."/>
            <person name="Birtle Z."/>
            <person name="Marques A.C."/>
            <person name="Graves T."/>
            <person name="Zhou S."/>
            <person name="Teague B."/>
            <person name="Potamousis K."/>
            <person name="Churas C."/>
            <person name="Place M."/>
            <person name="Herschleb J."/>
            <person name="Runnheim R."/>
            <person name="Forrest D."/>
            <person name="Amos-Landgraf J."/>
            <person name="Schwartz D.C."/>
            <person name="Cheng Z."/>
            <person name="Lindblad-Toh K."/>
            <person name="Eichler E.E."/>
            <person name="Ponting C.P."/>
        </authorList>
    </citation>
    <scope>NUCLEOTIDE SEQUENCE [LARGE SCALE GENOMIC DNA]</scope>
    <source>
        <strain>C57BL/6J</strain>
    </source>
</reference>
<reference key="3">
    <citation type="journal article" date="2004" name="Genome Res.">
        <title>The status, quality, and expansion of the NIH full-length cDNA project: the Mammalian Gene Collection (MGC).</title>
        <authorList>
            <consortium name="The MGC Project Team"/>
        </authorList>
    </citation>
    <scope>NUCLEOTIDE SEQUENCE [LARGE SCALE MRNA]</scope>
    <source>
        <strain>FVB/N</strain>
        <tissue>Kidney</tissue>
    </source>
</reference>
<reference key="4">
    <citation type="journal article" date="2010" name="Cell">
        <title>A tissue-specific atlas of mouse protein phosphorylation and expression.</title>
        <authorList>
            <person name="Huttlin E.L."/>
            <person name="Jedrychowski M.P."/>
            <person name="Elias J.E."/>
            <person name="Goswami T."/>
            <person name="Rad R."/>
            <person name="Beausoleil S.A."/>
            <person name="Villen J."/>
            <person name="Haas W."/>
            <person name="Sowa M.E."/>
            <person name="Gygi S.P."/>
        </authorList>
    </citation>
    <scope>IDENTIFICATION BY MASS SPECTROMETRY [LARGE SCALE ANALYSIS]</scope>
    <source>
        <tissue>Liver</tissue>
        <tissue>Spleen</tissue>
    </source>
</reference>
<reference evidence="5 6 7" key="5">
    <citation type="submission" date="2019-07" db="PDB data bank">
        <title>High resolution structure of mouse CXorf40A.</title>
        <authorList>
            <person name="Wu B.X."/>
        </authorList>
    </citation>
    <scope>X-RAY CRYSTALLOGRAPHY (1.54 ANGSTROMS)</scope>
</reference>
<organism>
    <name type="scientific">Mus musculus</name>
    <name type="common">Mouse</name>
    <dbReference type="NCBI Taxonomy" id="10090"/>
    <lineage>
        <taxon>Eukaryota</taxon>
        <taxon>Metazoa</taxon>
        <taxon>Chordata</taxon>
        <taxon>Craniata</taxon>
        <taxon>Vertebrata</taxon>
        <taxon>Euteleostomi</taxon>
        <taxon>Mammalia</taxon>
        <taxon>Eutheria</taxon>
        <taxon>Euarchontoglires</taxon>
        <taxon>Glires</taxon>
        <taxon>Rodentia</taxon>
        <taxon>Myomorpha</taxon>
        <taxon>Muroidea</taxon>
        <taxon>Muridae</taxon>
        <taxon>Murinae</taxon>
        <taxon>Mus</taxon>
        <taxon>Mus</taxon>
    </lineage>
</organism>
<comment type="function">
    <text evidence="1">May play a role in cell protection during the inflammatory response. In epithelial cells, negatively regulates IL6 production and apoptosis through the regulation of MT2A expression.</text>
</comment>
<comment type="subunit">
    <text evidence="1">Interacts with MT2A.</text>
</comment>
<comment type="similarity">
    <text evidence="3">Belongs to the EOLA family.</text>
</comment>
<proteinExistence type="evidence at protein level"/>
<protein>
    <recommendedName>
        <fullName evidence="1">Protein EOLA1</fullName>
    </recommendedName>
    <alternativeName>
        <fullName evidence="1">Endothelial-overexpressed lipopolysaccharide-associated factor 1</fullName>
    </alternativeName>
    <alternativeName>
        <fullName evidence="4">Endothelium and lymphocyte associated ASCH domain 1</fullName>
    </alternativeName>
</protein>
<evidence type="ECO:0000250" key="1">
    <source>
        <dbReference type="UniProtKB" id="Q8TE69"/>
    </source>
</evidence>
<evidence type="ECO:0000255" key="2"/>
<evidence type="ECO:0000305" key="3"/>
<evidence type="ECO:0000312" key="4">
    <source>
        <dbReference type="MGI" id="MGI:1915868"/>
    </source>
</evidence>
<evidence type="ECO:0007744" key="5">
    <source>
        <dbReference type="PDB" id="6KIR"/>
    </source>
</evidence>
<evidence type="ECO:0007744" key="6">
    <source>
        <dbReference type="PDB" id="6KIS"/>
    </source>
</evidence>
<evidence type="ECO:0007744" key="7">
    <source>
        <dbReference type="PDB" id="6KIT"/>
    </source>
</evidence>
<evidence type="ECO:0007829" key="8">
    <source>
        <dbReference type="PDB" id="6KIS"/>
    </source>
</evidence>
<dbReference type="EMBL" id="AK003642">
    <property type="protein sequence ID" value="BAB22908.1"/>
    <property type="molecule type" value="mRNA"/>
</dbReference>
<dbReference type="EMBL" id="AK169935">
    <property type="protein sequence ID" value="BAE41469.1"/>
    <property type="molecule type" value="mRNA"/>
</dbReference>
<dbReference type="EMBL" id="AL672026">
    <property type="status" value="NOT_ANNOTATED_CDS"/>
    <property type="molecule type" value="Genomic_DNA"/>
</dbReference>
<dbReference type="EMBL" id="BC024574">
    <property type="protein sequence ID" value="AAH24574.1"/>
    <property type="molecule type" value="mRNA"/>
</dbReference>
<dbReference type="CCDS" id="CCDS30174.1"/>
<dbReference type="RefSeq" id="NP_081063.1">
    <property type="nucleotide sequence ID" value="NM_026787.2"/>
</dbReference>
<dbReference type="PDB" id="6KIR">
    <property type="method" value="X-ray"/>
    <property type="resolution" value="1.55 A"/>
    <property type="chains" value="A=1-157"/>
</dbReference>
<dbReference type="PDB" id="6KIS">
    <property type="method" value="X-ray"/>
    <property type="resolution" value="1.54 A"/>
    <property type="chains" value="A=1-157"/>
</dbReference>
<dbReference type="PDB" id="6KIT">
    <property type="method" value="X-ray"/>
    <property type="resolution" value="1.57 A"/>
    <property type="chains" value="A=1-156"/>
</dbReference>
<dbReference type="PDBsum" id="6KIR"/>
<dbReference type="PDBsum" id="6KIS"/>
<dbReference type="PDBsum" id="6KIT"/>
<dbReference type="SMR" id="Q9D1F3"/>
<dbReference type="BioGRID" id="212956">
    <property type="interactions" value="1"/>
</dbReference>
<dbReference type="FunCoup" id="Q9D1F3">
    <property type="interactions" value="7"/>
</dbReference>
<dbReference type="STRING" id="10090.ENSMUSP00000052765"/>
<dbReference type="PaxDb" id="10090-ENSMUSP00000052765"/>
<dbReference type="DNASU" id="68618"/>
<dbReference type="Ensembl" id="ENSMUST00000053981.6">
    <property type="protein sequence ID" value="ENSMUSP00000052765.6"/>
    <property type="gene ID" value="ENSMUSG00000045237.6"/>
</dbReference>
<dbReference type="GeneID" id="68618"/>
<dbReference type="KEGG" id="mmu:68618"/>
<dbReference type="UCSC" id="uc009tjf.1">
    <property type="organism name" value="mouse"/>
</dbReference>
<dbReference type="AGR" id="MGI:1915868"/>
<dbReference type="CTD" id="91966"/>
<dbReference type="MGI" id="MGI:1915868">
    <property type="gene designation" value="Eola1"/>
</dbReference>
<dbReference type="VEuPathDB" id="HostDB:ENSMUSG00000045237"/>
<dbReference type="eggNOG" id="ENOG502RZ9S">
    <property type="taxonomic scope" value="Eukaryota"/>
</dbReference>
<dbReference type="GeneTree" id="ENSGT00390000012182"/>
<dbReference type="HOGENOM" id="CLU_116791_0_0_1"/>
<dbReference type="InParanoid" id="Q9D1F3"/>
<dbReference type="OMA" id="HVAQRDW"/>
<dbReference type="OrthoDB" id="2865258at2759"/>
<dbReference type="PhylomeDB" id="Q9D1F3"/>
<dbReference type="TreeFam" id="TF332845"/>
<dbReference type="BioGRID-ORCS" id="68618">
    <property type="hits" value="4 hits in 77 CRISPR screens"/>
</dbReference>
<dbReference type="PRO" id="PR:Q9D1F3"/>
<dbReference type="Proteomes" id="UP000000589">
    <property type="component" value="Chromosome X"/>
</dbReference>
<dbReference type="RNAct" id="Q9D1F3">
    <property type="molecule type" value="protein"/>
</dbReference>
<dbReference type="Bgee" id="ENSMUSG00000045237">
    <property type="expression patterns" value="Expressed in primary oocyte and 70 other cell types or tissues"/>
</dbReference>
<dbReference type="Gene3D" id="2.30.130.30">
    <property type="entry name" value="Hypothetical protein"/>
    <property type="match status" value="1"/>
</dbReference>
<dbReference type="InterPro" id="IPR007374">
    <property type="entry name" value="ASCH_domain"/>
</dbReference>
<dbReference type="InterPro" id="IPR033615">
    <property type="entry name" value="EOLA1/EOLA2"/>
</dbReference>
<dbReference type="InterPro" id="IPR015947">
    <property type="entry name" value="PUA-like_sf"/>
</dbReference>
<dbReference type="PANTHER" id="PTHR31666">
    <property type="entry name" value="PROTEIN CXORF40A-RELATED"/>
    <property type="match status" value="1"/>
</dbReference>
<dbReference type="PANTHER" id="PTHR31666:SF0">
    <property type="entry name" value="PROTEIN EOLA1-RELATED"/>
    <property type="match status" value="1"/>
</dbReference>
<dbReference type="Pfam" id="PF04266">
    <property type="entry name" value="ASCH"/>
    <property type="match status" value="1"/>
</dbReference>
<dbReference type="SMART" id="SM01022">
    <property type="entry name" value="ASCH"/>
    <property type="match status" value="1"/>
</dbReference>
<dbReference type="SUPFAM" id="SSF88697">
    <property type="entry name" value="PUA domain-like"/>
    <property type="match status" value="1"/>
</dbReference>
<gene>
    <name evidence="4" type="primary">Eola1</name>
</gene>
<feature type="chain" id="PRO_0000079734" description="Protein EOLA1">
    <location>
        <begin position="1"/>
        <end position="157"/>
    </location>
</feature>
<feature type="domain" description="ASCH" evidence="2">
    <location>
        <begin position="6"/>
        <end position="92"/>
    </location>
</feature>
<feature type="sequence conflict" description="In Ref. 1; BAE41469." evidence="3" ref="1">
    <original>S</original>
    <variation>P</variation>
    <location>
        <position position="125"/>
    </location>
</feature>
<feature type="strand" evidence="8">
    <location>
        <begin position="1"/>
        <end position="10"/>
    </location>
</feature>
<feature type="helix" evidence="8">
    <location>
        <begin position="12"/>
        <end position="17"/>
    </location>
</feature>
<feature type="strand" evidence="8">
    <location>
        <begin position="23"/>
        <end position="28"/>
    </location>
</feature>
<feature type="helix" evidence="8">
    <location>
        <begin position="30"/>
        <end position="34"/>
    </location>
</feature>
<feature type="strand" evidence="8">
    <location>
        <begin position="37"/>
        <end position="47"/>
    </location>
</feature>
<feature type="helix" evidence="8">
    <location>
        <begin position="53"/>
        <end position="59"/>
    </location>
</feature>
<feature type="helix" evidence="8">
    <location>
        <begin position="65"/>
        <end position="75"/>
    </location>
</feature>
<feature type="turn" evidence="8">
    <location>
        <begin position="76"/>
        <end position="78"/>
    </location>
</feature>
<feature type="strand" evidence="8">
    <location>
        <begin position="80"/>
        <end position="94"/>
    </location>
</feature>
<feature type="helix" evidence="8">
    <location>
        <begin position="101"/>
        <end position="111"/>
    </location>
</feature>
<feature type="strand" evidence="8">
    <location>
        <begin position="120"/>
        <end position="135"/>
    </location>
</feature>
<feature type="strand" evidence="8">
    <location>
        <begin position="140"/>
        <end position="147"/>
    </location>
</feature>
<feature type="helix" evidence="8">
    <location>
        <begin position="149"/>
        <end position="151"/>
    </location>
</feature>